<sequence>MAASTTSRTNSRVNYSNEIHDLSTVQGGSAAAAAAALFYPDSKSIADIFPPHLGKKVISEVVATFLLVFVTCGAASIYGEDNARISQLGQSVAGGLIVTVMIYATGHISGAHMNPAVTLSFACFRHFPWIQVPFYWAAQFTGAMCAAFVLKAVLQPIAVIGTTTPSGPHWHALAIEIVVTFNMMFVTCAVATDSRAVGELAGLAVGSAVCITSIFAGPVSGGSMNPARTLAPAVASNVFTGLWIYFLGPVVGTLSGAWVYTYIRFEEAPAAAKPDTQRLSSFKLRRMQSQSALAADEFDTV</sequence>
<comment type="function">
    <text evidence="1">Aquaporins facilitate the transport of water and small neutral solutes across cell membranes.</text>
</comment>
<comment type="subcellular location">
    <subcellularLocation>
        <location evidence="3">Membrane</location>
        <topology evidence="3">Multi-pass membrane protein</topology>
    </subcellularLocation>
</comment>
<comment type="domain">
    <text>Aquaporins contain two tandem repeats each containing three membrane-spanning domains and a pore-forming loop with the signature motif Asn-Pro-Ala (NPA).</text>
</comment>
<comment type="similarity">
    <text evidence="3">Belongs to the MIP/aquaporin (TC 1.A.8) family. NIP (TC 1.A.8.12) subfamily.</text>
</comment>
<dbReference type="EMBL" id="AF342810">
    <property type="protein sequence ID" value="AAK26849.1"/>
    <property type="molecule type" value="mRNA"/>
</dbReference>
<dbReference type="RefSeq" id="NP_001105517.1">
    <property type="nucleotide sequence ID" value="NM_001112047.1"/>
</dbReference>
<dbReference type="SMR" id="Q9AT74"/>
<dbReference type="FunCoup" id="Q9AT74">
    <property type="interactions" value="27"/>
</dbReference>
<dbReference type="STRING" id="4577.Q9AT74"/>
<dbReference type="PaxDb" id="4577-GRMZM2G081239_P01"/>
<dbReference type="EnsemblPlants" id="Zm00001eb372380_T002">
    <property type="protein sequence ID" value="Zm00001eb372380_P002"/>
    <property type="gene ID" value="Zm00001eb372380"/>
</dbReference>
<dbReference type="GeneID" id="542497"/>
<dbReference type="Gramene" id="Zm00001eb372380_T002">
    <property type="protein sequence ID" value="Zm00001eb372380_P002"/>
    <property type="gene ID" value="Zm00001eb372380"/>
</dbReference>
<dbReference type="KEGG" id="zma:542497"/>
<dbReference type="eggNOG" id="KOG0223">
    <property type="taxonomic scope" value="Eukaryota"/>
</dbReference>
<dbReference type="HOGENOM" id="CLU_020019_3_1_1"/>
<dbReference type="InParanoid" id="Q9AT74"/>
<dbReference type="OMA" id="SENCKGI"/>
<dbReference type="OrthoDB" id="3222at2759"/>
<dbReference type="Proteomes" id="UP000007305">
    <property type="component" value="Chromosome 9"/>
</dbReference>
<dbReference type="ExpressionAtlas" id="Q9AT74">
    <property type="expression patterns" value="baseline and differential"/>
</dbReference>
<dbReference type="GO" id="GO:0016020">
    <property type="term" value="C:membrane"/>
    <property type="evidence" value="ECO:0007669"/>
    <property type="project" value="UniProtKB-SubCell"/>
</dbReference>
<dbReference type="GO" id="GO:0015267">
    <property type="term" value="F:channel activity"/>
    <property type="evidence" value="ECO:0007669"/>
    <property type="project" value="InterPro"/>
</dbReference>
<dbReference type="CDD" id="cd00333">
    <property type="entry name" value="MIP"/>
    <property type="match status" value="1"/>
</dbReference>
<dbReference type="FunFam" id="1.20.1080.10:FF:000013">
    <property type="entry name" value="Aquaporin NIP2-1"/>
    <property type="match status" value="1"/>
</dbReference>
<dbReference type="Gene3D" id="1.20.1080.10">
    <property type="entry name" value="Glycerol uptake facilitator protein"/>
    <property type="match status" value="1"/>
</dbReference>
<dbReference type="InterPro" id="IPR023271">
    <property type="entry name" value="Aquaporin-like"/>
</dbReference>
<dbReference type="InterPro" id="IPR034294">
    <property type="entry name" value="Aquaporin_transptr"/>
</dbReference>
<dbReference type="InterPro" id="IPR000425">
    <property type="entry name" value="MIP"/>
</dbReference>
<dbReference type="InterPro" id="IPR022357">
    <property type="entry name" value="MIP_CS"/>
</dbReference>
<dbReference type="PANTHER" id="PTHR45724">
    <property type="entry name" value="AQUAPORIN NIP2-1"/>
    <property type="match status" value="1"/>
</dbReference>
<dbReference type="PANTHER" id="PTHR45724:SF9">
    <property type="entry name" value="AQUAPORIN NIP2-2"/>
    <property type="match status" value="1"/>
</dbReference>
<dbReference type="Pfam" id="PF00230">
    <property type="entry name" value="MIP"/>
    <property type="match status" value="1"/>
</dbReference>
<dbReference type="PRINTS" id="PR00783">
    <property type="entry name" value="MINTRINSICP"/>
</dbReference>
<dbReference type="SUPFAM" id="SSF81338">
    <property type="entry name" value="Aquaporin-like"/>
    <property type="match status" value="1"/>
</dbReference>
<dbReference type="PROSITE" id="PS00221">
    <property type="entry name" value="MIP"/>
    <property type="match status" value="1"/>
</dbReference>
<accession>Q9AT74</accession>
<gene>
    <name type="primary">NIP2-3</name>
</gene>
<keyword id="KW-0472">Membrane</keyword>
<keyword id="KW-1185">Reference proteome</keyword>
<keyword id="KW-0677">Repeat</keyword>
<keyword id="KW-0812">Transmembrane</keyword>
<keyword id="KW-1133">Transmembrane helix</keyword>
<keyword id="KW-0813">Transport</keyword>
<name>NIP23_MAIZE</name>
<evidence type="ECO:0000250" key="1"/>
<evidence type="ECO:0000255" key="2"/>
<evidence type="ECO:0000305" key="3"/>
<reference key="1">
    <citation type="journal article" date="2001" name="Plant Physiol.">
        <title>Aquaporins constitute a large and highly divergent protein family in maize.</title>
        <authorList>
            <person name="Chaumont F."/>
            <person name="Barrieu F."/>
            <person name="Wojcik E."/>
            <person name="Chrispeels M.J."/>
            <person name="Jung R."/>
        </authorList>
    </citation>
    <scope>NUCLEOTIDE SEQUENCE [MRNA]</scope>
    <scope>GENE FAMILY</scope>
    <scope>NOMENCLATURE</scope>
    <source>
        <strain>cv. B73</strain>
    </source>
</reference>
<organism>
    <name type="scientific">Zea mays</name>
    <name type="common">Maize</name>
    <dbReference type="NCBI Taxonomy" id="4577"/>
    <lineage>
        <taxon>Eukaryota</taxon>
        <taxon>Viridiplantae</taxon>
        <taxon>Streptophyta</taxon>
        <taxon>Embryophyta</taxon>
        <taxon>Tracheophyta</taxon>
        <taxon>Spermatophyta</taxon>
        <taxon>Magnoliopsida</taxon>
        <taxon>Liliopsida</taxon>
        <taxon>Poales</taxon>
        <taxon>Poaceae</taxon>
        <taxon>PACMAD clade</taxon>
        <taxon>Panicoideae</taxon>
        <taxon>Andropogonodae</taxon>
        <taxon>Andropogoneae</taxon>
        <taxon>Tripsacinae</taxon>
        <taxon>Zea</taxon>
    </lineage>
</organism>
<feature type="chain" id="PRO_0000286032" description="Aquaporin NIP2-3">
    <location>
        <begin position="1"/>
        <end position="301"/>
    </location>
</feature>
<feature type="transmembrane region" description="Helical; Name=1" evidence="2">
    <location>
        <begin position="57"/>
        <end position="77"/>
    </location>
</feature>
<feature type="transmembrane region" description="Helical; Name=2" evidence="2">
    <location>
        <begin position="91"/>
        <end position="111"/>
    </location>
</feature>
<feature type="transmembrane region" description="Helical; Name=3" evidence="2">
    <location>
        <begin position="132"/>
        <end position="154"/>
    </location>
</feature>
<feature type="transmembrane region" description="Helical; Name=4" evidence="2">
    <location>
        <begin position="172"/>
        <end position="192"/>
    </location>
</feature>
<feature type="transmembrane region" description="Helical; Name=5" evidence="2">
    <location>
        <begin position="200"/>
        <end position="220"/>
    </location>
</feature>
<feature type="transmembrane region" description="Helical; Name=6" evidence="2">
    <location>
        <begin position="238"/>
        <end position="258"/>
    </location>
</feature>
<feature type="short sequence motif" description="NPA 1" evidence="1">
    <location>
        <begin position="114"/>
        <end position="116"/>
    </location>
</feature>
<feature type="short sequence motif" description="NPA 2" evidence="1">
    <location>
        <begin position="225"/>
        <end position="227"/>
    </location>
</feature>
<protein>
    <recommendedName>
        <fullName>Aquaporin NIP2-3</fullName>
    </recommendedName>
    <alternativeName>
        <fullName>NOD26-like intrinsic protein 2-3</fullName>
    </alternativeName>
    <alternativeName>
        <fullName>ZmNIP2-3</fullName>
    </alternativeName>
    <alternativeName>
        <fullName>ZmNIP2;3</fullName>
    </alternativeName>
</protein>
<proteinExistence type="evidence at transcript level"/>